<sequence>MTNLKQVLTADISCQLLYVNETQASQVESLQALIAKHKLPIILNAELVTEKLNQKRRQQLSQIVTQPILLLDEKDKLSWLSEGLSVAPEWDKLQRRVVSAGRKSELLLQAAKLTADSEVIDATAGFGHDSLILASTGAQVTMLEQQPLMALLLLVEQLRMSTLPNWQKLMSRLQIINTDALTYFARFNNYLGNGNEQAIDVIYLDPMFPEDSYQDSKTGKGAKVGKHMQALHQLAHPPTLDEEQQLLQSAQAVVSQNGQKQGRVIVKRPQFAPSLADQQPSESWNNEAVRFDGYFV</sequence>
<organism>
    <name type="scientific">Psychrobacter cryohalolentis (strain ATCC BAA-1226 / DSM 17306 / VKM B-2378 / K5)</name>
    <dbReference type="NCBI Taxonomy" id="335284"/>
    <lineage>
        <taxon>Bacteria</taxon>
        <taxon>Pseudomonadati</taxon>
        <taxon>Pseudomonadota</taxon>
        <taxon>Gammaproteobacteria</taxon>
        <taxon>Moraxellales</taxon>
        <taxon>Moraxellaceae</taxon>
        <taxon>Psychrobacter</taxon>
    </lineage>
</organism>
<reference key="1">
    <citation type="submission" date="2006-03" db="EMBL/GenBank/DDBJ databases">
        <title>Complete sequence of chromosome of Psychrobacter cryohalolentis K5.</title>
        <authorList>
            <consortium name="US DOE Joint Genome Institute"/>
            <person name="Copeland A."/>
            <person name="Lucas S."/>
            <person name="Lapidus A."/>
            <person name="Barry K."/>
            <person name="Detter J.C."/>
            <person name="Glavina T."/>
            <person name="Hammon N."/>
            <person name="Israni S."/>
            <person name="Dalin E."/>
            <person name="Tice H."/>
            <person name="Pitluck S."/>
            <person name="Brettin T."/>
            <person name="Bruce D."/>
            <person name="Han C."/>
            <person name="Tapia R."/>
            <person name="Sims D.R."/>
            <person name="Gilna P."/>
            <person name="Schmutz J."/>
            <person name="Larimer F."/>
            <person name="Land M."/>
            <person name="Hauser L."/>
            <person name="Kyrpides N."/>
            <person name="Kim E."/>
            <person name="Richardson P."/>
        </authorList>
    </citation>
    <scope>NUCLEOTIDE SEQUENCE [LARGE SCALE GENOMIC DNA]</scope>
    <source>
        <strain>ATCC BAA-1226 / DSM 17306 / VKM B-2378 / K5</strain>
    </source>
</reference>
<evidence type="ECO:0000250" key="1"/>
<evidence type="ECO:0000305" key="2"/>
<accession>Q1Q994</accession>
<protein>
    <recommendedName>
        <fullName>Ribosomal RNA small subunit methyltransferase J</fullName>
        <ecNumber>2.1.1.242</ecNumber>
    </recommendedName>
    <alternativeName>
        <fullName>16S rRNA m2G1516 methyltransferase</fullName>
    </alternativeName>
    <alternativeName>
        <fullName>rRNA (guanine-N(2)-)-methyltransferase</fullName>
    </alternativeName>
</protein>
<gene>
    <name type="primary">rsmJ</name>
    <name type="ordered locus">Pcryo_1982</name>
</gene>
<name>RSMJ_PSYCK</name>
<dbReference type="EC" id="2.1.1.242"/>
<dbReference type="EMBL" id="CP000323">
    <property type="protein sequence ID" value="ABE75759.1"/>
    <property type="molecule type" value="Genomic_DNA"/>
</dbReference>
<dbReference type="RefSeq" id="WP_011514302.1">
    <property type="nucleotide sequence ID" value="NC_007969.1"/>
</dbReference>
<dbReference type="SMR" id="Q1Q994"/>
<dbReference type="STRING" id="335284.Pcryo_1982"/>
<dbReference type="KEGG" id="pcr:Pcryo_1982"/>
<dbReference type="eggNOG" id="COG0742">
    <property type="taxonomic scope" value="Bacteria"/>
</dbReference>
<dbReference type="HOGENOM" id="CLU_076324_1_0_6"/>
<dbReference type="Proteomes" id="UP000002425">
    <property type="component" value="Chromosome"/>
</dbReference>
<dbReference type="GO" id="GO:0005737">
    <property type="term" value="C:cytoplasm"/>
    <property type="evidence" value="ECO:0007669"/>
    <property type="project" value="UniProtKB-SubCell"/>
</dbReference>
<dbReference type="GO" id="GO:0008990">
    <property type="term" value="F:rRNA (guanine-N2-)-methyltransferase activity"/>
    <property type="evidence" value="ECO:0007669"/>
    <property type="project" value="UniProtKB-UniRule"/>
</dbReference>
<dbReference type="Gene3D" id="3.40.50.150">
    <property type="entry name" value="Vaccinia Virus protein VP39"/>
    <property type="match status" value="1"/>
</dbReference>
<dbReference type="InterPro" id="IPR007536">
    <property type="entry name" value="16SrRNA_methylTrfase_J"/>
</dbReference>
<dbReference type="InterPro" id="IPR029063">
    <property type="entry name" value="SAM-dependent_MTases_sf"/>
</dbReference>
<dbReference type="PANTHER" id="PTHR36112">
    <property type="entry name" value="RIBOSOMAL RNA SMALL SUBUNIT METHYLTRANSFERASE J"/>
    <property type="match status" value="1"/>
</dbReference>
<dbReference type="PANTHER" id="PTHR36112:SF1">
    <property type="entry name" value="RIBOSOMAL RNA SMALL SUBUNIT METHYLTRANSFERASE J"/>
    <property type="match status" value="1"/>
</dbReference>
<dbReference type="Pfam" id="PF04445">
    <property type="entry name" value="SAM_MT"/>
    <property type="match status" value="1"/>
</dbReference>
<dbReference type="SUPFAM" id="SSF53335">
    <property type="entry name" value="S-adenosyl-L-methionine-dependent methyltransferases"/>
    <property type="match status" value="1"/>
</dbReference>
<feature type="chain" id="PRO_0000244280" description="Ribosomal RNA small subunit methyltransferase J">
    <location>
        <begin position="1"/>
        <end position="296"/>
    </location>
</feature>
<feature type="binding site" evidence="1">
    <location>
        <position position="205"/>
    </location>
    <ligand>
        <name>S-adenosyl-L-methionine</name>
        <dbReference type="ChEBI" id="CHEBI:59789"/>
    </ligand>
</feature>
<keyword id="KW-0963">Cytoplasm</keyword>
<keyword id="KW-0489">Methyltransferase</keyword>
<keyword id="KW-0698">rRNA processing</keyword>
<keyword id="KW-0949">S-adenosyl-L-methionine</keyword>
<keyword id="KW-0808">Transferase</keyword>
<proteinExistence type="inferred from homology"/>
<comment type="function">
    <text evidence="1">Specifically methylates the guanosine in position 1516 of 16S rRNA.</text>
</comment>
<comment type="catalytic activity">
    <reaction>
        <text>guanosine(1516) in 16S rRNA + S-adenosyl-L-methionine = N(2)-methylguanosine(1516) in 16S rRNA + S-adenosyl-L-homocysteine + H(+)</text>
        <dbReference type="Rhea" id="RHEA:43220"/>
        <dbReference type="Rhea" id="RHEA-COMP:10412"/>
        <dbReference type="Rhea" id="RHEA-COMP:10413"/>
        <dbReference type="ChEBI" id="CHEBI:15378"/>
        <dbReference type="ChEBI" id="CHEBI:57856"/>
        <dbReference type="ChEBI" id="CHEBI:59789"/>
        <dbReference type="ChEBI" id="CHEBI:74269"/>
        <dbReference type="ChEBI" id="CHEBI:74481"/>
        <dbReference type="EC" id="2.1.1.242"/>
    </reaction>
</comment>
<comment type="subcellular location">
    <subcellularLocation>
        <location evidence="2">Cytoplasm</location>
    </subcellularLocation>
</comment>
<comment type="similarity">
    <text evidence="2">Belongs to the methyltransferase superfamily. RsmJ family.</text>
</comment>